<organism>
    <name type="scientific">Haemophilus ducreyi (strain 35000HP / ATCC 700724)</name>
    <dbReference type="NCBI Taxonomy" id="233412"/>
    <lineage>
        <taxon>Bacteria</taxon>
        <taxon>Pseudomonadati</taxon>
        <taxon>Pseudomonadota</taxon>
        <taxon>Gammaproteobacteria</taxon>
        <taxon>Pasteurellales</taxon>
        <taxon>Pasteurellaceae</taxon>
        <taxon>Haemophilus</taxon>
    </lineage>
</organism>
<keyword id="KW-0963">Cytoplasm</keyword>
<keyword id="KW-0378">Hydrolase</keyword>
<keyword id="KW-0479">Metal-binding</keyword>
<keyword id="KW-0547">Nucleotide-binding</keyword>
<keyword id="KW-1185">Reference proteome</keyword>
<accession>Q7VN28</accession>
<dbReference type="EC" id="3.1.3.5" evidence="1"/>
<dbReference type="EMBL" id="AE017143">
    <property type="protein sequence ID" value="AAP95668.1"/>
    <property type="molecule type" value="Genomic_DNA"/>
</dbReference>
<dbReference type="RefSeq" id="WP_010944719.1">
    <property type="nucleotide sequence ID" value="NC_002940.2"/>
</dbReference>
<dbReference type="SMR" id="Q7VN28"/>
<dbReference type="STRING" id="233412.HD_0758"/>
<dbReference type="KEGG" id="hdu:HD_0758"/>
<dbReference type="eggNOG" id="COG0496">
    <property type="taxonomic scope" value="Bacteria"/>
</dbReference>
<dbReference type="HOGENOM" id="CLU_045192_1_2_6"/>
<dbReference type="OrthoDB" id="9780815at2"/>
<dbReference type="Proteomes" id="UP000001022">
    <property type="component" value="Chromosome"/>
</dbReference>
<dbReference type="GO" id="GO:0005737">
    <property type="term" value="C:cytoplasm"/>
    <property type="evidence" value="ECO:0007669"/>
    <property type="project" value="UniProtKB-SubCell"/>
</dbReference>
<dbReference type="GO" id="GO:0008254">
    <property type="term" value="F:3'-nucleotidase activity"/>
    <property type="evidence" value="ECO:0007669"/>
    <property type="project" value="TreeGrafter"/>
</dbReference>
<dbReference type="GO" id="GO:0008253">
    <property type="term" value="F:5'-nucleotidase activity"/>
    <property type="evidence" value="ECO:0007669"/>
    <property type="project" value="UniProtKB-UniRule"/>
</dbReference>
<dbReference type="GO" id="GO:0004309">
    <property type="term" value="F:exopolyphosphatase activity"/>
    <property type="evidence" value="ECO:0007669"/>
    <property type="project" value="TreeGrafter"/>
</dbReference>
<dbReference type="GO" id="GO:0046872">
    <property type="term" value="F:metal ion binding"/>
    <property type="evidence" value="ECO:0007669"/>
    <property type="project" value="UniProtKB-UniRule"/>
</dbReference>
<dbReference type="GO" id="GO:0000166">
    <property type="term" value="F:nucleotide binding"/>
    <property type="evidence" value="ECO:0007669"/>
    <property type="project" value="UniProtKB-KW"/>
</dbReference>
<dbReference type="FunFam" id="3.40.1210.10:FF:000001">
    <property type="entry name" value="5'/3'-nucleotidase SurE"/>
    <property type="match status" value="1"/>
</dbReference>
<dbReference type="Gene3D" id="3.40.1210.10">
    <property type="entry name" value="Survival protein SurE-like phosphatase/nucleotidase"/>
    <property type="match status" value="1"/>
</dbReference>
<dbReference type="HAMAP" id="MF_00060">
    <property type="entry name" value="SurE"/>
    <property type="match status" value="1"/>
</dbReference>
<dbReference type="InterPro" id="IPR030048">
    <property type="entry name" value="SurE"/>
</dbReference>
<dbReference type="InterPro" id="IPR002828">
    <property type="entry name" value="SurE-like_Pase/nucleotidase"/>
</dbReference>
<dbReference type="InterPro" id="IPR036523">
    <property type="entry name" value="SurE-like_sf"/>
</dbReference>
<dbReference type="NCBIfam" id="NF001489">
    <property type="entry name" value="PRK00346.1-3"/>
    <property type="match status" value="1"/>
</dbReference>
<dbReference type="NCBIfam" id="NF001490">
    <property type="entry name" value="PRK00346.1-4"/>
    <property type="match status" value="1"/>
</dbReference>
<dbReference type="NCBIfam" id="TIGR00087">
    <property type="entry name" value="surE"/>
    <property type="match status" value="1"/>
</dbReference>
<dbReference type="PANTHER" id="PTHR30457">
    <property type="entry name" value="5'-NUCLEOTIDASE SURE"/>
    <property type="match status" value="1"/>
</dbReference>
<dbReference type="PANTHER" id="PTHR30457:SF12">
    <property type="entry name" value="5'_3'-NUCLEOTIDASE SURE"/>
    <property type="match status" value="1"/>
</dbReference>
<dbReference type="Pfam" id="PF01975">
    <property type="entry name" value="SurE"/>
    <property type="match status" value="1"/>
</dbReference>
<dbReference type="SUPFAM" id="SSF64167">
    <property type="entry name" value="SurE-like"/>
    <property type="match status" value="1"/>
</dbReference>
<evidence type="ECO:0000255" key="1">
    <source>
        <dbReference type="HAMAP-Rule" id="MF_00060"/>
    </source>
</evidence>
<proteinExistence type="inferred from homology"/>
<reference key="1">
    <citation type="submission" date="2003-06" db="EMBL/GenBank/DDBJ databases">
        <title>The complete genome sequence of Haemophilus ducreyi.</title>
        <authorList>
            <person name="Munson R.S. Jr."/>
            <person name="Ray W.C."/>
            <person name="Mahairas G."/>
            <person name="Sabo P."/>
            <person name="Mungur R."/>
            <person name="Johnson L."/>
            <person name="Nguyen D."/>
            <person name="Wang J."/>
            <person name="Forst C."/>
            <person name="Hood L."/>
        </authorList>
    </citation>
    <scope>NUCLEOTIDE SEQUENCE [LARGE SCALE GENOMIC DNA]</scope>
    <source>
        <strain>35000HP / ATCC 700724</strain>
    </source>
</reference>
<protein>
    <recommendedName>
        <fullName evidence="1">5'-nucleotidase SurE</fullName>
        <ecNumber evidence="1">3.1.3.5</ecNumber>
    </recommendedName>
    <alternativeName>
        <fullName evidence="1">Nucleoside 5'-monophosphate phosphohydrolase</fullName>
    </alternativeName>
</protein>
<sequence length="253" mass="27160">MNILLSNDDGYHAEGIQTLATRLREAGHCVTVIAPDRNRSAASSCLTLMEPIRVHQLGTFDYSVIAGTPADCVHLALNGLFETSFDLVVSGINHGANLGDDVVYSGTVAAALEGRHLRLPSLAVSLVGKQSEGHLFGNNHFETAAQVVLDVLPKLVDMALPRQILNINVPDLPYSAIKGMLVTRLGQRSPSAEILKSQDPRGSTIYWLGENGSAIDNGEGTDFYALAHDYVSITPIHADMTAHHAIKVLSEML</sequence>
<gene>
    <name evidence="1" type="primary">surE</name>
    <name type="ordered locus">HD_0758</name>
</gene>
<comment type="function">
    <text evidence="1">Nucleotidase that shows phosphatase activity on nucleoside 5'-monophosphates.</text>
</comment>
<comment type="catalytic activity">
    <reaction evidence="1">
        <text>a ribonucleoside 5'-phosphate + H2O = a ribonucleoside + phosphate</text>
        <dbReference type="Rhea" id="RHEA:12484"/>
        <dbReference type="ChEBI" id="CHEBI:15377"/>
        <dbReference type="ChEBI" id="CHEBI:18254"/>
        <dbReference type="ChEBI" id="CHEBI:43474"/>
        <dbReference type="ChEBI" id="CHEBI:58043"/>
        <dbReference type="EC" id="3.1.3.5"/>
    </reaction>
</comment>
<comment type="cofactor">
    <cofactor evidence="1">
        <name>a divalent metal cation</name>
        <dbReference type="ChEBI" id="CHEBI:60240"/>
    </cofactor>
    <text evidence="1">Binds 1 divalent metal cation per subunit.</text>
</comment>
<comment type="subcellular location">
    <subcellularLocation>
        <location evidence="1">Cytoplasm</location>
    </subcellularLocation>
</comment>
<comment type="similarity">
    <text evidence="1">Belongs to the SurE nucleotidase family.</text>
</comment>
<name>SURE_HAEDU</name>
<feature type="chain" id="PRO_0000111813" description="5'-nucleotidase SurE">
    <location>
        <begin position="1"/>
        <end position="253"/>
    </location>
</feature>
<feature type="binding site" evidence="1">
    <location>
        <position position="8"/>
    </location>
    <ligand>
        <name>a divalent metal cation</name>
        <dbReference type="ChEBI" id="CHEBI:60240"/>
    </ligand>
</feature>
<feature type="binding site" evidence="1">
    <location>
        <position position="9"/>
    </location>
    <ligand>
        <name>a divalent metal cation</name>
        <dbReference type="ChEBI" id="CHEBI:60240"/>
    </ligand>
</feature>
<feature type="binding site" evidence="1">
    <location>
        <position position="40"/>
    </location>
    <ligand>
        <name>a divalent metal cation</name>
        <dbReference type="ChEBI" id="CHEBI:60240"/>
    </ligand>
</feature>
<feature type="binding site" evidence="1">
    <location>
        <position position="93"/>
    </location>
    <ligand>
        <name>a divalent metal cation</name>
        <dbReference type="ChEBI" id="CHEBI:60240"/>
    </ligand>
</feature>